<feature type="transit peptide" description="Mitochondrion" evidence="2">
    <location>
        <begin position="1"/>
        <end status="unknown"/>
    </location>
</feature>
<feature type="chain" id="PRO_0000023444" description="[Pyruvate dehydrogenase (acetyl-transferring)] kinase isozyme 3, mitochondrial">
    <location>
        <begin status="unknown"/>
        <end position="415"/>
    </location>
</feature>
<feature type="domain" description="Histidine kinase" evidence="3">
    <location>
        <begin position="131"/>
        <end position="362"/>
    </location>
</feature>
<feature type="region of interest" description="Disordered" evidence="4">
    <location>
        <begin position="383"/>
        <end position="415"/>
    </location>
</feature>
<feature type="compositionally biased region" description="Basic and acidic residues" evidence="4">
    <location>
        <begin position="395"/>
        <end position="415"/>
    </location>
</feature>
<feature type="binding site" evidence="1">
    <location>
        <begin position="247"/>
        <end position="254"/>
    </location>
    <ligand>
        <name>ATP</name>
        <dbReference type="ChEBI" id="CHEBI:30616"/>
    </ligand>
</feature>
<feature type="binding site" evidence="1">
    <location>
        <position position="287"/>
    </location>
    <ligand>
        <name>ATP</name>
        <dbReference type="ChEBI" id="CHEBI:30616"/>
    </ligand>
</feature>
<feature type="binding site" evidence="1">
    <location>
        <begin position="306"/>
        <end position="307"/>
    </location>
    <ligand>
        <name>ATP</name>
        <dbReference type="ChEBI" id="CHEBI:30616"/>
    </ligand>
</feature>
<feature type="binding site" evidence="1">
    <location>
        <begin position="323"/>
        <end position="328"/>
    </location>
    <ligand>
        <name>ATP</name>
        <dbReference type="ChEBI" id="CHEBI:30616"/>
    </ligand>
</feature>
<feature type="modified residue" description="N6-succinyllysine" evidence="6">
    <location>
        <position position="278"/>
    </location>
</feature>
<feature type="sequence conflict" description="In Ref. 1; BAC40379." evidence="5" ref="1">
    <original>R</original>
    <variation>C</variation>
    <location>
        <position position="21"/>
    </location>
</feature>
<organism>
    <name type="scientific">Mus musculus</name>
    <name type="common">Mouse</name>
    <dbReference type="NCBI Taxonomy" id="10090"/>
    <lineage>
        <taxon>Eukaryota</taxon>
        <taxon>Metazoa</taxon>
        <taxon>Chordata</taxon>
        <taxon>Craniata</taxon>
        <taxon>Vertebrata</taxon>
        <taxon>Euteleostomi</taxon>
        <taxon>Mammalia</taxon>
        <taxon>Eutheria</taxon>
        <taxon>Euarchontoglires</taxon>
        <taxon>Glires</taxon>
        <taxon>Rodentia</taxon>
        <taxon>Myomorpha</taxon>
        <taxon>Muroidea</taxon>
        <taxon>Muridae</taxon>
        <taxon>Murinae</taxon>
        <taxon>Mus</taxon>
        <taxon>Mus</taxon>
    </lineage>
</organism>
<comment type="function">
    <text evidence="1">Inhibits pyruvate dehydrogenase activity by phosphorylation of the E1 subunit PDHA1, and thereby regulates glucose metabolism and aerobic respiration. Can also phosphorylate PDHA2. Decreases glucose utilization and increases fat metabolism in response to prolonged fasting, and as adaptation to a high-fat diet. Plays a role in glucose homeostasis and in maintaining normal blood glucose levels in function of nutrient levels and under starvation. Plays a role in the generation of reactive oxygen species (By similarity).</text>
</comment>
<comment type="catalytic activity">
    <reaction>
        <text>L-seryl-[pyruvate dehydrogenase E1 alpha subunit] + ATP = O-phospho-L-seryl-[pyruvate dehydrogenase E1 alpha subunit] + ADP + H(+)</text>
        <dbReference type="Rhea" id="RHEA:23052"/>
        <dbReference type="Rhea" id="RHEA-COMP:13689"/>
        <dbReference type="Rhea" id="RHEA-COMP:13690"/>
        <dbReference type="ChEBI" id="CHEBI:15378"/>
        <dbReference type="ChEBI" id="CHEBI:29999"/>
        <dbReference type="ChEBI" id="CHEBI:30616"/>
        <dbReference type="ChEBI" id="CHEBI:83421"/>
        <dbReference type="ChEBI" id="CHEBI:456216"/>
        <dbReference type="EC" id="2.7.11.2"/>
    </reaction>
</comment>
<comment type="subunit">
    <text evidence="1">Homodimer. Interacts with the pyruvate dehydrogenase complex subunit DLAT, and is part of the multimeric pyruvate dehydrogenase complex that contains multiple copies of pyruvate dehydrogenase (E1), dihydrolipoamide acetyltransferase (DLAT, E2) and lipoamide dehydrogenase (DLD, E3) (By similarity).</text>
</comment>
<comment type="subcellular location">
    <subcellularLocation>
        <location evidence="1">Mitochondrion matrix</location>
    </subcellularLocation>
</comment>
<comment type="similarity">
    <text evidence="5">Belongs to the PDK/BCKDK protein kinase family.</text>
</comment>
<gene>
    <name type="primary">Pdk3</name>
</gene>
<dbReference type="EC" id="2.7.11.2"/>
<dbReference type="EMBL" id="AK075879">
    <property type="protein sequence ID" value="BAC36024.1"/>
    <property type="molecule type" value="mRNA"/>
</dbReference>
<dbReference type="EMBL" id="AK075985">
    <property type="protein sequence ID" value="BAC36097.1"/>
    <property type="molecule type" value="mRNA"/>
</dbReference>
<dbReference type="EMBL" id="AK088478">
    <property type="protein sequence ID" value="BAC40379.1"/>
    <property type="molecule type" value="mRNA"/>
</dbReference>
<dbReference type="EMBL" id="BC008126">
    <property type="protein sequence ID" value="AAH08126.1"/>
    <property type="molecule type" value="mRNA"/>
</dbReference>
<dbReference type="CCDS" id="CCDS30275.1"/>
<dbReference type="RefSeq" id="NP_663605.1">
    <property type="nucleotide sequence ID" value="NM_145630.3"/>
</dbReference>
<dbReference type="SMR" id="Q922H2"/>
<dbReference type="BioGRID" id="231815">
    <property type="interactions" value="10"/>
</dbReference>
<dbReference type="FunCoup" id="Q922H2">
    <property type="interactions" value="2214"/>
</dbReference>
<dbReference type="IntAct" id="Q922H2">
    <property type="interactions" value="3"/>
</dbReference>
<dbReference type="MINT" id="Q922H2"/>
<dbReference type="STRING" id="10090.ENSMUSP00000036604"/>
<dbReference type="ChEMBL" id="CHEMBL5465338"/>
<dbReference type="GlyGen" id="Q922H2">
    <property type="glycosylation" value="1 site, 1 O-linked glycan (1 site)"/>
</dbReference>
<dbReference type="PhosphoSitePlus" id="Q922H2"/>
<dbReference type="SwissPalm" id="Q922H2"/>
<dbReference type="jPOST" id="Q922H2"/>
<dbReference type="PaxDb" id="10090-ENSMUSP00000036604"/>
<dbReference type="ProteomicsDB" id="288083"/>
<dbReference type="Pumba" id="Q922H2"/>
<dbReference type="Antibodypedia" id="24576">
    <property type="antibodies" value="308 antibodies from 31 providers"/>
</dbReference>
<dbReference type="DNASU" id="236900"/>
<dbReference type="Ensembl" id="ENSMUST00000045748.7">
    <property type="protein sequence ID" value="ENSMUSP00000036604.7"/>
    <property type="gene ID" value="ENSMUSG00000035232.9"/>
</dbReference>
<dbReference type="GeneID" id="236900"/>
<dbReference type="KEGG" id="mmu:236900"/>
<dbReference type="UCSC" id="uc009tsx.1">
    <property type="organism name" value="mouse"/>
</dbReference>
<dbReference type="AGR" id="MGI:2384308"/>
<dbReference type="CTD" id="5165"/>
<dbReference type="MGI" id="MGI:2384308">
    <property type="gene designation" value="Pdk3"/>
</dbReference>
<dbReference type="VEuPathDB" id="HostDB:ENSMUSG00000035232"/>
<dbReference type="eggNOG" id="KOG0787">
    <property type="taxonomic scope" value="Eukaryota"/>
</dbReference>
<dbReference type="GeneTree" id="ENSGT01030000234646"/>
<dbReference type="HOGENOM" id="CLU_023861_1_1_1"/>
<dbReference type="InParanoid" id="Q922H2"/>
<dbReference type="OMA" id="PIERRYF"/>
<dbReference type="OrthoDB" id="241648at2759"/>
<dbReference type="PhylomeDB" id="Q922H2"/>
<dbReference type="TreeFam" id="TF314918"/>
<dbReference type="BRENDA" id="2.7.11.2">
    <property type="organism ID" value="3474"/>
</dbReference>
<dbReference type="Reactome" id="R-MMU-204174">
    <property type="pathway name" value="Regulation of pyruvate dehydrogenase (PDH) complex"/>
</dbReference>
<dbReference type="Reactome" id="R-MMU-5362517">
    <property type="pathway name" value="Signaling by Retinoic Acid"/>
</dbReference>
<dbReference type="BioGRID-ORCS" id="236900">
    <property type="hits" value="2 hits in 80 CRISPR screens"/>
</dbReference>
<dbReference type="ChiTaRS" id="Pdk3">
    <property type="organism name" value="mouse"/>
</dbReference>
<dbReference type="PRO" id="PR:Q922H2"/>
<dbReference type="Proteomes" id="UP000000589">
    <property type="component" value="Chromosome X"/>
</dbReference>
<dbReference type="RNAct" id="Q922H2">
    <property type="molecule type" value="protein"/>
</dbReference>
<dbReference type="Bgee" id="ENSMUSG00000035232">
    <property type="expression patterns" value="Expressed in spermatid and 273 other cell types or tissues"/>
</dbReference>
<dbReference type="ExpressionAtlas" id="Q922H2">
    <property type="expression patterns" value="baseline and differential"/>
</dbReference>
<dbReference type="GO" id="GO:0005759">
    <property type="term" value="C:mitochondrial matrix"/>
    <property type="evidence" value="ECO:0007669"/>
    <property type="project" value="UniProtKB-SubCell"/>
</dbReference>
<dbReference type="GO" id="GO:0005739">
    <property type="term" value="C:mitochondrion"/>
    <property type="evidence" value="ECO:0007005"/>
    <property type="project" value="MGI"/>
</dbReference>
<dbReference type="GO" id="GO:0005730">
    <property type="term" value="C:nucleolus"/>
    <property type="evidence" value="ECO:0007669"/>
    <property type="project" value="Ensembl"/>
</dbReference>
<dbReference type="GO" id="GO:0005524">
    <property type="term" value="F:ATP binding"/>
    <property type="evidence" value="ECO:0007669"/>
    <property type="project" value="UniProtKB-KW"/>
</dbReference>
<dbReference type="GO" id="GO:0004674">
    <property type="term" value="F:protein serine/threonine kinase activity"/>
    <property type="evidence" value="ECO:0000250"/>
    <property type="project" value="UniProtKB"/>
</dbReference>
<dbReference type="GO" id="GO:0004740">
    <property type="term" value="F:pyruvate dehydrogenase (acetyl-transferring) kinase activity"/>
    <property type="evidence" value="ECO:0000250"/>
    <property type="project" value="UniProtKB"/>
</dbReference>
<dbReference type="GO" id="GO:0071398">
    <property type="term" value="P:cellular response to fatty acid"/>
    <property type="evidence" value="ECO:0000250"/>
    <property type="project" value="UniProtKB"/>
</dbReference>
<dbReference type="GO" id="GO:0071333">
    <property type="term" value="P:cellular response to glucose stimulus"/>
    <property type="evidence" value="ECO:0000250"/>
    <property type="project" value="UniProtKB"/>
</dbReference>
<dbReference type="GO" id="GO:0097411">
    <property type="term" value="P:hypoxia-inducible factor-1alpha signaling pathway"/>
    <property type="evidence" value="ECO:0000250"/>
    <property type="project" value="UniProtKB"/>
</dbReference>
<dbReference type="GO" id="GO:0018105">
    <property type="term" value="P:peptidyl-serine phosphorylation"/>
    <property type="evidence" value="ECO:0000250"/>
    <property type="project" value="UniProtKB"/>
</dbReference>
<dbReference type="GO" id="GO:0035357">
    <property type="term" value="P:peroxisome proliferator activated receptor signaling pathway"/>
    <property type="evidence" value="ECO:0000250"/>
    <property type="project" value="UniProtKB"/>
</dbReference>
<dbReference type="GO" id="GO:0010510">
    <property type="term" value="P:regulation of acetyl-CoA biosynthetic process from pyruvate"/>
    <property type="evidence" value="ECO:0000250"/>
    <property type="project" value="UniProtKB"/>
</dbReference>
<dbReference type="GO" id="GO:0010906">
    <property type="term" value="P:regulation of glucose metabolic process"/>
    <property type="evidence" value="ECO:0000250"/>
    <property type="project" value="UniProtKB"/>
</dbReference>
<dbReference type="GO" id="GO:2000377">
    <property type="term" value="P:regulation of reactive oxygen species metabolic process"/>
    <property type="evidence" value="ECO:0000250"/>
    <property type="project" value="UniProtKB"/>
</dbReference>
<dbReference type="CDD" id="cd16929">
    <property type="entry name" value="HATPase_PDK-like"/>
    <property type="match status" value="1"/>
</dbReference>
<dbReference type="FunFam" id="1.20.140.20:FF:000001">
    <property type="entry name" value="[Pyruvate dehydrogenase (acetyl-transferring)] kinase isozyme 2, mitochondrial"/>
    <property type="match status" value="1"/>
</dbReference>
<dbReference type="FunFam" id="3.30.565.10:FF:000007">
    <property type="entry name" value="Mitochondrial pyruvate dehydrogenase kinase isoform 2"/>
    <property type="match status" value="1"/>
</dbReference>
<dbReference type="Gene3D" id="1.20.140.20">
    <property type="entry name" value="Alpha-ketoacid/pyruvate dehydrogenase kinase, N-terminal domain"/>
    <property type="match status" value="1"/>
</dbReference>
<dbReference type="Gene3D" id="3.30.565.10">
    <property type="entry name" value="Histidine kinase-like ATPase, C-terminal domain"/>
    <property type="match status" value="1"/>
</dbReference>
<dbReference type="InterPro" id="IPR036784">
    <property type="entry name" value="AK/P_DHK_N_sf"/>
</dbReference>
<dbReference type="InterPro" id="IPR018955">
    <property type="entry name" value="BCDHK/PDK_N"/>
</dbReference>
<dbReference type="InterPro" id="IPR039028">
    <property type="entry name" value="BCKD/PDK"/>
</dbReference>
<dbReference type="InterPro" id="IPR036890">
    <property type="entry name" value="HATPase_C_sf"/>
</dbReference>
<dbReference type="InterPro" id="IPR005467">
    <property type="entry name" value="His_kinase_dom"/>
</dbReference>
<dbReference type="PANTHER" id="PTHR11947:SF21">
    <property type="entry name" value="[PYRUVATE DEHYDROGENASE (ACETYL-TRANSFERRING)] KINASE ISOZYME 3, MITOCHONDRIAL"/>
    <property type="match status" value="1"/>
</dbReference>
<dbReference type="PANTHER" id="PTHR11947">
    <property type="entry name" value="PYRUVATE DEHYDROGENASE KINASE"/>
    <property type="match status" value="1"/>
</dbReference>
<dbReference type="Pfam" id="PF10436">
    <property type="entry name" value="BCDHK_Adom3"/>
    <property type="match status" value="1"/>
</dbReference>
<dbReference type="Pfam" id="PF02518">
    <property type="entry name" value="HATPase_c"/>
    <property type="match status" value="1"/>
</dbReference>
<dbReference type="SMART" id="SM00387">
    <property type="entry name" value="HATPase_c"/>
    <property type="match status" value="1"/>
</dbReference>
<dbReference type="SUPFAM" id="SSF69012">
    <property type="entry name" value="alpha-ketoacid dehydrogenase kinase, N-terminal domain"/>
    <property type="match status" value="1"/>
</dbReference>
<dbReference type="SUPFAM" id="SSF55874">
    <property type="entry name" value="ATPase domain of HSP90 chaperone/DNA topoisomerase II/histidine kinase"/>
    <property type="match status" value="1"/>
</dbReference>
<dbReference type="PROSITE" id="PS50109">
    <property type="entry name" value="HIS_KIN"/>
    <property type="match status" value="1"/>
</dbReference>
<evidence type="ECO:0000250" key="1"/>
<evidence type="ECO:0000255" key="2"/>
<evidence type="ECO:0000255" key="3">
    <source>
        <dbReference type="PROSITE-ProRule" id="PRU00107"/>
    </source>
</evidence>
<evidence type="ECO:0000256" key="4">
    <source>
        <dbReference type="SAM" id="MobiDB-lite"/>
    </source>
</evidence>
<evidence type="ECO:0000305" key="5"/>
<evidence type="ECO:0007744" key="6">
    <source>
    </source>
</evidence>
<sequence>MRLFYRLLKQPVPKQIERYSRFSPSPLSIKQFLDFGRDNACEKTSYMFLRKELPVRLANTMREVNLLPDNLLNRPSVGLVQSWYMQSFLELLEYENKSPEDPRVLDNFLNVLINIRNRHNDVVPTMAQGVIEYKEKFGFDPFISSNIQYFLDRFYTNRISFRMLINQHTLLFGGDTNPAHPKHIGSIDPTCNVADVVKDAYETAKMLCEQYYLVAPELEVEEFNAKAPNKPIQVVYVPSHLFHMLFELFKNSMRATVELHEDKKEGYPAVKTLVTLGKEDLSIKISDLGGGVPLRKIDRLFNYMYSTAPRPSLEPTRAAPLAGFGYGLPISRLYARYFQGDLKLYSMEGVGTDAVIYLKALSSESFERLPVFNKSAWRHYKTTPEADDWSNPSSEPRDASKYKAKQDKIKSNRTF</sequence>
<reference key="1">
    <citation type="journal article" date="2005" name="Science">
        <title>The transcriptional landscape of the mammalian genome.</title>
        <authorList>
            <person name="Carninci P."/>
            <person name="Kasukawa T."/>
            <person name="Katayama S."/>
            <person name="Gough J."/>
            <person name="Frith M.C."/>
            <person name="Maeda N."/>
            <person name="Oyama R."/>
            <person name="Ravasi T."/>
            <person name="Lenhard B."/>
            <person name="Wells C."/>
            <person name="Kodzius R."/>
            <person name="Shimokawa K."/>
            <person name="Bajic V.B."/>
            <person name="Brenner S.E."/>
            <person name="Batalov S."/>
            <person name="Forrest A.R."/>
            <person name="Zavolan M."/>
            <person name="Davis M.J."/>
            <person name="Wilming L.G."/>
            <person name="Aidinis V."/>
            <person name="Allen J.E."/>
            <person name="Ambesi-Impiombato A."/>
            <person name="Apweiler R."/>
            <person name="Aturaliya R.N."/>
            <person name="Bailey T.L."/>
            <person name="Bansal M."/>
            <person name="Baxter L."/>
            <person name="Beisel K.W."/>
            <person name="Bersano T."/>
            <person name="Bono H."/>
            <person name="Chalk A.M."/>
            <person name="Chiu K.P."/>
            <person name="Choudhary V."/>
            <person name="Christoffels A."/>
            <person name="Clutterbuck D.R."/>
            <person name="Crowe M.L."/>
            <person name="Dalla E."/>
            <person name="Dalrymple B.P."/>
            <person name="de Bono B."/>
            <person name="Della Gatta G."/>
            <person name="di Bernardo D."/>
            <person name="Down T."/>
            <person name="Engstrom P."/>
            <person name="Fagiolini M."/>
            <person name="Faulkner G."/>
            <person name="Fletcher C.F."/>
            <person name="Fukushima T."/>
            <person name="Furuno M."/>
            <person name="Futaki S."/>
            <person name="Gariboldi M."/>
            <person name="Georgii-Hemming P."/>
            <person name="Gingeras T.R."/>
            <person name="Gojobori T."/>
            <person name="Green R.E."/>
            <person name="Gustincich S."/>
            <person name="Harbers M."/>
            <person name="Hayashi Y."/>
            <person name="Hensch T.K."/>
            <person name="Hirokawa N."/>
            <person name="Hill D."/>
            <person name="Huminiecki L."/>
            <person name="Iacono M."/>
            <person name="Ikeo K."/>
            <person name="Iwama A."/>
            <person name="Ishikawa T."/>
            <person name="Jakt M."/>
            <person name="Kanapin A."/>
            <person name="Katoh M."/>
            <person name="Kawasawa Y."/>
            <person name="Kelso J."/>
            <person name="Kitamura H."/>
            <person name="Kitano H."/>
            <person name="Kollias G."/>
            <person name="Krishnan S.P."/>
            <person name="Kruger A."/>
            <person name="Kummerfeld S.K."/>
            <person name="Kurochkin I.V."/>
            <person name="Lareau L.F."/>
            <person name="Lazarevic D."/>
            <person name="Lipovich L."/>
            <person name="Liu J."/>
            <person name="Liuni S."/>
            <person name="McWilliam S."/>
            <person name="Madan Babu M."/>
            <person name="Madera M."/>
            <person name="Marchionni L."/>
            <person name="Matsuda H."/>
            <person name="Matsuzawa S."/>
            <person name="Miki H."/>
            <person name="Mignone F."/>
            <person name="Miyake S."/>
            <person name="Morris K."/>
            <person name="Mottagui-Tabar S."/>
            <person name="Mulder N."/>
            <person name="Nakano N."/>
            <person name="Nakauchi H."/>
            <person name="Ng P."/>
            <person name="Nilsson R."/>
            <person name="Nishiguchi S."/>
            <person name="Nishikawa S."/>
            <person name="Nori F."/>
            <person name="Ohara O."/>
            <person name="Okazaki Y."/>
            <person name="Orlando V."/>
            <person name="Pang K.C."/>
            <person name="Pavan W.J."/>
            <person name="Pavesi G."/>
            <person name="Pesole G."/>
            <person name="Petrovsky N."/>
            <person name="Piazza S."/>
            <person name="Reed J."/>
            <person name="Reid J.F."/>
            <person name="Ring B.Z."/>
            <person name="Ringwald M."/>
            <person name="Rost B."/>
            <person name="Ruan Y."/>
            <person name="Salzberg S.L."/>
            <person name="Sandelin A."/>
            <person name="Schneider C."/>
            <person name="Schoenbach C."/>
            <person name="Sekiguchi K."/>
            <person name="Semple C.A."/>
            <person name="Seno S."/>
            <person name="Sessa L."/>
            <person name="Sheng Y."/>
            <person name="Shibata Y."/>
            <person name="Shimada H."/>
            <person name="Shimada K."/>
            <person name="Silva D."/>
            <person name="Sinclair B."/>
            <person name="Sperling S."/>
            <person name="Stupka E."/>
            <person name="Sugiura K."/>
            <person name="Sultana R."/>
            <person name="Takenaka Y."/>
            <person name="Taki K."/>
            <person name="Tammoja K."/>
            <person name="Tan S.L."/>
            <person name="Tang S."/>
            <person name="Taylor M.S."/>
            <person name="Tegner J."/>
            <person name="Teichmann S.A."/>
            <person name="Ueda H.R."/>
            <person name="van Nimwegen E."/>
            <person name="Verardo R."/>
            <person name="Wei C.L."/>
            <person name="Yagi K."/>
            <person name="Yamanishi H."/>
            <person name="Zabarovsky E."/>
            <person name="Zhu S."/>
            <person name="Zimmer A."/>
            <person name="Hide W."/>
            <person name="Bult C."/>
            <person name="Grimmond S.M."/>
            <person name="Teasdale R.D."/>
            <person name="Liu E.T."/>
            <person name="Brusic V."/>
            <person name="Quackenbush J."/>
            <person name="Wahlestedt C."/>
            <person name="Mattick J.S."/>
            <person name="Hume D.A."/>
            <person name="Kai C."/>
            <person name="Sasaki D."/>
            <person name="Tomaru Y."/>
            <person name="Fukuda S."/>
            <person name="Kanamori-Katayama M."/>
            <person name="Suzuki M."/>
            <person name="Aoki J."/>
            <person name="Arakawa T."/>
            <person name="Iida J."/>
            <person name="Imamura K."/>
            <person name="Itoh M."/>
            <person name="Kato T."/>
            <person name="Kawaji H."/>
            <person name="Kawagashira N."/>
            <person name="Kawashima T."/>
            <person name="Kojima M."/>
            <person name="Kondo S."/>
            <person name="Konno H."/>
            <person name="Nakano K."/>
            <person name="Ninomiya N."/>
            <person name="Nishio T."/>
            <person name="Okada M."/>
            <person name="Plessy C."/>
            <person name="Shibata K."/>
            <person name="Shiraki T."/>
            <person name="Suzuki S."/>
            <person name="Tagami M."/>
            <person name="Waki K."/>
            <person name="Watahiki A."/>
            <person name="Okamura-Oho Y."/>
            <person name="Suzuki H."/>
            <person name="Kawai J."/>
            <person name="Hayashizaki Y."/>
        </authorList>
    </citation>
    <scope>NUCLEOTIDE SEQUENCE [LARGE SCALE MRNA]</scope>
    <source>
        <strain>C57BL/6J</strain>
        <tissue>Tongue</tissue>
    </source>
</reference>
<reference key="2">
    <citation type="journal article" date="2004" name="Genome Res.">
        <title>The status, quality, and expansion of the NIH full-length cDNA project: the Mammalian Gene Collection (MGC).</title>
        <authorList>
            <consortium name="The MGC Project Team"/>
        </authorList>
    </citation>
    <scope>NUCLEOTIDE SEQUENCE [LARGE SCALE MRNA]</scope>
    <source>
        <strain>FVB/N</strain>
        <tissue>Mammary tumor</tissue>
    </source>
</reference>
<reference key="3">
    <citation type="journal article" date="2010" name="Cell">
        <title>A tissue-specific atlas of mouse protein phosphorylation and expression.</title>
        <authorList>
            <person name="Huttlin E.L."/>
            <person name="Jedrychowski M.P."/>
            <person name="Elias J.E."/>
            <person name="Goswami T."/>
            <person name="Rad R."/>
            <person name="Beausoleil S.A."/>
            <person name="Villen J."/>
            <person name="Haas W."/>
            <person name="Sowa M.E."/>
            <person name="Gygi S.P."/>
        </authorList>
    </citation>
    <scope>IDENTIFICATION BY MASS SPECTROMETRY [LARGE SCALE ANALYSIS]</scope>
    <source>
        <tissue>Brain</tissue>
        <tissue>Kidney</tissue>
        <tissue>Lung</tissue>
        <tissue>Pancreas</tissue>
        <tissue>Spleen</tissue>
        <tissue>Testis</tissue>
    </source>
</reference>
<reference key="4">
    <citation type="journal article" date="2013" name="Mol. Cell">
        <title>SIRT5-mediated lysine desuccinylation impacts diverse metabolic pathways.</title>
        <authorList>
            <person name="Park J."/>
            <person name="Chen Y."/>
            <person name="Tishkoff D.X."/>
            <person name="Peng C."/>
            <person name="Tan M."/>
            <person name="Dai L."/>
            <person name="Xie Z."/>
            <person name="Zhang Y."/>
            <person name="Zwaans B.M."/>
            <person name="Skinner M.E."/>
            <person name="Lombard D.B."/>
            <person name="Zhao Y."/>
        </authorList>
    </citation>
    <scope>SUCCINYLATION [LARGE SCALE ANALYSIS] AT LYS-278</scope>
    <scope>IDENTIFICATION BY MASS SPECTROMETRY [LARGE SCALE ANALYSIS]</scope>
    <source>
        <tissue>Embryonic fibroblast</tissue>
    </source>
</reference>
<keyword id="KW-0067">ATP-binding</keyword>
<keyword id="KW-0418">Kinase</keyword>
<keyword id="KW-0496">Mitochondrion</keyword>
<keyword id="KW-0547">Nucleotide-binding</keyword>
<keyword id="KW-1185">Reference proteome</keyword>
<keyword id="KW-0808">Transferase</keyword>
<keyword id="KW-0809">Transit peptide</keyword>
<name>PDK3_MOUSE</name>
<protein>
    <recommendedName>
        <fullName>[Pyruvate dehydrogenase (acetyl-transferring)] kinase isozyme 3, mitochondrial</fullName>
        <ecNumber>2.7.11.2</ecNumber>
    </recommendedName>
    <alternativeName>
        <fullName>Pyruvate dehydrogenase kinase isoform 3</fullName>
    </alternativeName>
</protein>
<proteinExistence type="evidence at protein level"/>
<accession>Q922H2</accession>
<accession>Q8BTX1</accession>